<reference key="1">
    <citation type="journal article" date="2006" name="J. Cell Biol.">
        <title>NDC1: a crucial membrane-integral nucleoporin of metazoan nuclear pore complexes.</title>
        <authorList>
            <person name="Stavru F."/>
            <person name="Hulsmann B.B."/>
            <person name="Spang A."/>
            <person name="Hartmann E."/>
            <person name="Cordes V.C."/>
            <person name="Gorlich D."/>
        </authorList>
    </citation>
    <scope>NUCLEOTIDE SEQUENCE [MRNA]</scope>
</reference>
<reference key="2">
    <citation type="journal article" date="2005" name="Science">
        <title>The transcriptional landscape of the mammalian genome.</title>
        <authorList>
            <person name="Carninci P."/>
            <person name="Kasukawa T."/>
            <person name="Katayama S."/>
            <person name="Gough J."/>
            <person name="Frith M.C."/>
            <person name="Maeda N."/>
            <person name="Oyama R."/>
            <person name="Ravasi T."/>
            <person name="Lenhard B."/>
            <person name="Wells C."/>
            <person name="Kodzius R."/>
            <person name="Shimokawa K."/>
            <person name="Bajic V.B."/>
            <person name="Brenner S.E."/>
            <person name="Batalov S."/>
            <person name="Forrest A.R."/>
            <person name="Zavolan M."/>
            <person name="Davis M.J."/>
            <person name="Wilming L.G."/>
            <person name="Aidinis V."/>
            <person name="Allen J.E."/>
            <person name="Ambesi-Impiombato A."/>
            <person name="Apweiler R."/>
            <person name="Aturaliya R.N."/>
            <person name="Bailey T.L."/>
            <person name="Bansal M."/>
            <person name="Baxter L."/>
            <person name="Beisel K.W."/>
            <person name="Bersano T."/>
            <person name="Bono H."/>
            <person name="Chalk A.M."/>
            <person name="Chiu K.P."/>
            <person name="Choudhary V."/>
            <person name="Christoffels A."/>
            <person name="Clutterbuck D.R."/>
            <person name="Crowe M.L."/>
            <person name="Dalla E."/>
            <person name="Dalrymple B.P."/>
            <person name="de Bono B."/>
            <person name="Della Gatta G."/>
            <person name="di Bernardo D."/>
            <person name="Down T."/>
            <person name="Engstrom P."/>
            <person name="Fagiolini M."/>
            <person name="Faulkner G."/>
            <person name="Fletcher C.F."/>
            <person name="Fukushima T."/>
            <person name="Furuno M."/>
            <person name="Futaki S."/>
            <person name="Gariboldi M."/>
            <person name="Georgii-Hemming P."/>
            <person name="Gingeras T.R."/>
            <person name="Gojobori T."/>
            <person name="Green R.E."/>
            <person name="Gustincich S."/>
            <person name="Harbers M."/>
            <person name="Hayashi Y."/>
            <person name="Hensch T.K."/>
            <person name="Hirokawa N."/>
            <person name="Hill D."/>
            <person name="Huminiecki L."/>
            <person name="Iacono M."/>
            <person name="Ikeo K."/>
            <person name="Iwama A."/>
            <person name="Ishikawa T."/>
            <person name="Jakt M."/>
            <person name="Kanapin A."/>
            <person name="Katoh M."/>
            <person name="Kawasawa Y."/>
            <person name="Kelso J."/>
            <person name="Kitamura H."/>
            <person name="Kitano H."/>
            <person name="Kollias G."/>
            <person name="Krishnan S.P."/>
            <person name="Kruger A."/>
            <person name="Kummerfeld S.K."/>
            <person name="Kurochkin I.V."/>
            <person name="Lareau L.F."/>
            <person name="Lazarevic D."/>
            <person name="Lipovich L."/>
            <person name="Liu J."/>
            <person name="Liuni S."/>
            <person name="McWilliam S."/>
            <person name="Madan Babu M."/>
            <person name="Madera M."/>
            <person name="Marchionni L."/>
            <person name="Matsuda H."/>
            <person name="Matsuzawa S."/>
            <person name="Miki H."/>
            <person name="Mignone F."/>
            <person name="Miyake S."/>
            <person name="Morris K."/>
            <person name="Mottagui-Tabar S."/>
            <person name="Mulder N."/>
            <person name="Nakano N."/>
            <person name="Nakauchi H."/>
            <person name="Ng P."/>
            <person name="Nilsson R."/>
            <person name="Nishiguchi S."/>
            <person name="Nishikawa S."/>
            <person name="Nori F."/>
            <person name="Ohara O."/>
            <person name="Okazaki Y."/>
            <person name="Orlando V."/>
            <person name="Pang K.C."/>
            <person name="Pavan W.J."/>
            <person name="Pavesi G."/>
            <person name="Pesole G."/>
            <person name="Petrovsky N."/>
            <person name="Piazza S."/>
            <person name="Reed J."/>
            <person name="Reid J.F."/>
            <person name="Ring B.Z."/>
            <person name="Ringwald M."/>
            <person name="Rost B."/>
            <person name="Ruan Y."/>
            <person name="Salzberg S.L."/>
            <person name="Sandelin A."/>
            <person name="Schneider C."/>
            <person name="Schoenbach C."/>
            <person name="Sekiguchi K."/>
            <person name="Semple C.A."/>
            <person name="Seno S."/>
            <person name="Sessa L."/>
            <person name="Sheng Y."/>
            <person name="Shibata Y."/>
            <person name="Shimada H."/>
            <person name="Shimada K."/>
            <person name="Silva D."/>
            <person name="Sinclair B."/>
            <person name="Sperling S."/>
            <person name="Stupka E."/>
            <person name="Sugiura K."/>
            <person name="Sultana R."/>
            <person name="Takenaka Y."/>
            <person name="Taki K."/>
            <person name="Tammoja K."/>
            <person name="Tan S.L."/>
            <person name="Tang S."/>
            <person name="Taylor M.S."/>
            <person name="Tegner J."/>
            <person name="Teichmann S.A."/>
            <person name="Ueda H.R."/>
            <person name="van Nimwegen E."/>
            <person name="Verardo R."/>
            <person name="Wei C.L."/>
            <person name="Yagi K."/>
            <person name="Yamanishi H."/>
            <person name="Zabarovsky E."/>
            <person name="Zhu S."/>
            <person name="Zimmer A."/>
            <person name="Hide W."/>
            <person name="Bult C."/>
            <person name="Grimmond S.M."/>
            <person name="Teasdale R.D."/>
            <person name="Liu E.T."/>
            <person name="Brusic V."/>
            <person name="Quackenbush J."/>
            <person name="Wahlestedt C."/>
            <person name="Mattick J.S."/>
            <person name="Hume D.A."/>
            <person name="Kai C."/>
            <person name="Sasaki D."/>
            <person name="Tomaru Y."/>
            <person name="Fukuda S."/>
            <person name="Kanamori-Katayama M."/>
            <person name="Suzuki M."/>
            <person name="Aoki J."/>
            <person name="Arakawa T."/>
            <person name="Iida J."/>
            <person name="Imamura K."/>
            <person name="Itoh M."/>
            <person name="Kato T."/>
            <person name="Kawaji H."/>
            <person name="Kawagashira N."/>
            <person name="Kawashima T."/>
            <person name="Kojima M."/>
            <person name="Kondo S."/>
            <person name="Konno H."/>
            <person name="Nakano K."/>
            <person name="Ninomiya N."/>
            <person name="Nishio T."/>
            <person name="Okada M."/>
            <person name="Plessy C."/>
            <person name="Shibata K."/>
            <person name="Shiraki T."/>
            <person name="Suzuki S."/>
            <person name="Tagami M."/>
            <person name="Waki K."/>
            <person name="Watahiki A."/>
            <person name="Okamura-Oho Y."/>
            <person name="Suzuki H."/>
            <person name="Kawai J."/>
            <person name="Hayashizaki Y."/>
        </authorList>
    </citation>
    <scope>NUCLEOTIDE SEQUENCE [LARGE SCALE MRNA]</scope>
    <source>
        <tissue>Lung</tissue>
    </source>
</reference>
<reference key="3">
    <citation type="journal article" date="2004" name="Genome Res.">
        <title>The status, quality, and expansion of the NIH full-length cDNA project: the Mammalian Gene Collection (MGC).</title>
        <authorList>
            <consortium name="The MGC Project Team"/>
        </authorList>
    </citation>
    <scope>NUCLEOTIDE SEQUENCE [LARGE SCALE MRNA]</scope>
    <source>
        <strain>FVB/N</strain>
        <tissue>Kidney</tissue>
    </source>
</reference>
<reference key="4">
    <citation type="journal article" date="2010" name="Cell">
        <title>A tissue-specific atlas of mouse protein phosphorylation and expression.</title>
        <authorList>
            <person name="Huttlin E.L."/>
            <person name="Jedrychowski M.P."/>
            <person name="Elias J.E."/>
            <person name="Goswami T."/>
            <person name="Rad R."/>
            <person name="Beausoleil S.A."/>
            <person name="Villen J."/>
            <person name="Haas W."/>
            <person name="Sowa M.E."/>
            <person name="Gygi S.P."/>
        </authorList>
    </citation>
    <scope>PHOSPHORYLATION [LARGE SCALE ANALYSIS] AT THR-448</scope>
    <scope>IDENTIFICATION BY MASS SPECTROMETRY [LARGE SCALE ANALYSIS]</scope>
    <source>
        <tissue>Spleen</tissue>
    </source>
</reference>
<comment type="function">
    <text evidence="1">Component of the nuclear pore complex (NPC), which plays a key role in de novo assembly and insertion of NPC in the nuclear envelope. Required for NPC and nuclear envelope assembly, possibly by forming a link between the nuclear envelope membrane and soluble nucleoporins, thereby anchoring the NPC in the membrane (By similarity).</text>
</comment>
<comment type="subunit">
    <text evidence="2">Interacts with the NUP35/NUP53.</text>
</comment>
<comment type="subcellular location">
    <subcellularLocation>
        <location evidence="1">Nucleus</location>
        <location evidence="1">Nuclear pore complex</location>
    </subcellularLocation>
    <subcellularLocation>
        <location evidence="1">Nucleus membrane</location>
        <topology evidence="1">Multi-pass membrane protein</topology>
    </subcellularLocation>
    <text evidence="1">Central core structure of the nuclear pore complex.</text>
</comment>
<comment type="PTM">
    <text evidence="1">Phosphorylated.</text>
</comment>
<comment type="similarity">
    <text evidence="5">Belongs to the NDC1 family.</text>
</comment>
<gene>
    <name type="primary">Ndc1</name>
    <name type="synonym">Tmem48</name>
</gene>
<name>NDC1_MOUSE</name>
<organism>
    <name type="scientific">Mus musculus</name>
    <name type="common">Mouse</name>
    <dbReference type="NCBI Taxonomy" id="10090"/>
    <lineage>
        <taxon>Eukaryota</taxon>
        <taxon>Metazoa</taxon>
        <taxon>Chordata</taxon>
        <taxon>Craniata</taxon>
        <taxon>Vertebrata</taxon>
        <taxon>Euteleostomi</taxon>
        <taxon>Mammalia</taxon>
        <taxon>Eutheria</taxon>
        <taxon>Euarchontoglires</taxon>
        <taxon>Glires</taxon>
        <taxon>Rodentia</taxon>
        <taxon>Myomorpha</taxon>
        <taxon>Muroidea</taxon>
        <taxon>Muridae</taxon>
        <taxon>Murinae</taxon>
        <taxon>Mus</taxon>
        <taxon>Mus</taxon>
    </lineage>
</organism>
<keyword id="KW-0472">Membrane</keyword>
<keyword id="KW-0509">mRNA transport</keyword>
<keyword id="KW-0906">Nuclear pore complex</keyword>
<keyword id="KW-0539">Nucleus</keyword>
<keyword id="KW-0597">Phosphoprotein</keyword>
<keyword id="KW-0653">Protein transport</keyword>
<keyword id="KW-1185">Reference proteome</keyword>
<keyword id="KW-0811">Translocation</keyword>
<keyword id="KW-0812">Transmembrane</keyword>
<keyword id="KW-1133">Transmembrane helix</keyword>
<keyword id="KW-0813">Transport</keyword>
<accession>Q8VCB1</accession>
<dbReference type="EMBL" id="DQ141695">
    <property type="protein sequence ID" value="AAZ73086.1"/>
    <property type="molecule type" value="mRNA"/>
</dbReference>
<dbReference type="EMBL" id="AK144734">
    <property type="protein sequence ID" value="BAE26039.1"/>
    <property type="molecule type" value="mRNA"/>
</dbReference>
<dbReference type="EMBL" id="BC021337">
    <property type="protein sequence ID" value="AAH21337.1"/>
    <property type="molecule type" value="mRNA"/>
</dbReference>
<dbReference type="CCDS" id="CCDS18438.1"/>
<dbReference type="RefSeq" id="NP_082631.1">
    <property type="nucleotide sequence ID" value="NM_028355.4"/>
</dbReference>
<dbReference type="SMR" id="Q8VCB1"/>
<dbReference type="BioGRID" id="215568">
    <property type="interactions" value="6"/>
</dbReference>
<dbReference type="ComplexPortal" id="CPX-4474">
    <property type="entry name" value="Nuclear pore complex"/>
</dbReference>
<dbReference type="FunCoup" id="Q8VCB1">
    <property type="interactions" value="2768"/>
</dbReference>
<dbReference type="IntAct" id="Q8VCB1">
    <property type="interactions" value="1"/>
</dbReference>
<dbReference type="STRING" id="10090.ENSMUSP00000120365"/>
<dbReference type="GlyGen" id="Q8VCB1">
    <property type="glycosylation" value="1 site, 1 O-linked glycan (1 site)"/>
</dbReference>
<dbReference type="iPTMnet" id="Q8VCB1"/>
<dbReference type="PhosphoSitePlus" id="Q8VCB1"/>
<dbReference type="SwissPalm" id="Q8VCB1"/>
<dbReference type="PaxDb" id="10090-ENSMUSP00000120365"/>
<dbReference type="PeptideAtlas" id="Q8VCB1"/>
<dbReference type="ProteomicsDB" id="293532"/>
<dbReference type="Pumba" id="Q8VCB1"/>
<dbReference type="Antibodypedia" id="33093">
    <property type="antibodies" value="61 antibodies from 18 providers"/>
</dbReference>
<dbReference type="Ensembl" id="ENSMUST00000139560.8">
    <property type="protein sequence ID" value="ENSMUSP00000120365.2"/>
    <property type="gene ID" value="ENSMUSG00000028614.15"/>
</dbReference>
<dbReference type="GeneID" id="72787"/>
<dbReference type="KEGG" id="mmu:72787"/>
<dbReference type="UCSC" id="uc008tzt.1">
    <property type="organism name" value="mouse"/>
</dbReference>
<dbReference type="AGR" id="MGI:1920037"/>
<dbReference type="CTD" id="55706"/>
<dbReference type="MGI" id="MGI:1920037">
    <property type="gene designation" value="Ndc1"/>
</dbReference>
<dbReference type="VEuPathDB" id="HostDB:ENSMUSG00000028614"/>
<dbReference type="eggNOG" id="KOG4358">
    <property type="taxonomic scope" value="Eukaryota"/>
</dbReference>
<dbReference type="GeneTree" id="ENSGT00390000014590"/>
<dbReference type="HOGENOM" id="CLU_027343_0_0_1"/>
<dbReference type="InParanoid" id="Q8VCB1"/>
<dbReference type="OMA" id="ILCQQHL"/>
<dbReference type="OrthoDB" id="67850at2759"/>
<dbReference type="PhylomeDB" id="Q8VCB1"/>
<dbReference type="TreeFam" id="TF324843"/>
<dbReference type="Reactome" id="R-MMU-159227">
    <property type="pathway name" value="Transport of the SLBP independent Mature mRNA"/>
</dbReference>
<dbReference type="Reactome" id="R-MMU-159230">
    <property type="pathway name" value="Transport of the SLBP Dependant Mature mRNA"/>
</dbReference>
<dbReference type="Reactome" id="R-MMU-159231">
    <property type="pathway name" value="Transport of Mature mRNA Derived from an Intronless Transcript"/>
</dbReference>
<dbReference type="Reactome" id="R-MMU-159236">
    <property type="pathway name" value="Transport of Mature mRNA derived from an Intron-Containing Transcript"/>
</dbReference>
<dbReference type="Reactome" id="R-MMU-170822">
    <property type="pathway name" value="Regulation of Glucokinase by Glucokinase Regulatory Protein"/>
</dbReference>
<dbReference type="Reactome" id="R-MMU-191859">
    <property type="pathway name" value="snRNP Assembly"/>
</dbReference>
<dbReference type="Reactome" id="R-MMU-3108214">
    <property type="pathway name" value="SUMOylation of DNA damage response and repair proteins"/>
</dbReference>
<dbReference type="Reactome" id="R-MMU-3232142">
    <property type="pathway name" value="SUMOylation of ubiquitinylation proteins"/>
</dbReference>
<dbReference type="Reactome" id="R-MMU-3301854">
    <property type="pathway name" value="Nuclear Pore Complex (NPC) Disassembly"/>
</dbReference>
<dbReference type="Reactome" id="R-MMU-3371453">
    <property type="pathway name" value="Regulation of HSF1-mediated heat shock response"/>
</dbReference>
<dbReference type="Reactome" id="R-MMU-4085377">
    <property type="pathway name" value="SUMOylation of SUMOylation proteins"/>
</dbReference>
<dbReference type="Reactome" id="R-MMU-4551638">
    <property type="pathway name" value="SUMOylation of chromatin organization proteins"/>
</dbReference>
<dbReference type="Reactome" id="R-MMU-4570464">
    <property type="pathway name" value="SUMOylation of RNA binding proteins"/>
</dbReference>
<dbReference type="Reactome" id="R-MMU-4615885">
    <property type="pathway name" value="SUMOylation of DNA replication proteins"/>
</dbReference>
<dbReference type="Reactome" id="R-MMU-5578749">
    <property type="pathway name" value="Transcriptional regulation by small RNAs"/>
</dbReference>
<dbReference type="Reactome" id="R-MMU-9615933">
    <property type="pathway name" value="Postmitotic nuclear pore complex (NPC) reformation"/>
</dbReference>
<dbReference type="BioGRID-ORCS" id="72787">
    <property type="hits" value="15 hits in 78 CRISPR screens"/>
</dbReference>
<dbReference type="ChiTaRS" id="Ndc1">
    <property type="organism name" value="mouse"/>
</dbReference>
<dbReference type="PRO" id="PR:Q8VCB1"/>
<dbReference type="Proteomes" id="UP000000589">
    <property type="component" value="Chromosome 4"/>
</dbReference>
<dbReference type="RNAct" id="Q8VCB1">
    <property type="molecule type" value="protein"/>
</dbReference>
<dbReference type="Bgee" id="ENSMUSG00000028614">
    <property type="expression patterns" value="Expressed in embryonic post-anal tail and 238 other cell types or tissues"/>
</dbReference>
<dbReference type="ExpressionAtlas" id="Q8VCB1">
    <property type="expression patterns" value="baseline and differential"/>
</dbReference>
<dbReference type="GO" id="GO:0015629">
    <property type="term" value="C:actin cytoskeleton"/>
    <property type="evidence" value="ECO:0007669"/>
    <property type="project" value="Ensembl"/>
</dbReference>
<dbReference type="GO" id="GO:0005737">
    <property type="term" value="C:cytoplasm"/>
    <property type="evidence" value="ECO:0000314"/>
    <property type="project" value="MGI"/>
</dbReference>
<dbReference type="GO" id="GO:0005635">
    <property type="term" value="C:nuclear envelope"/>
    <property type="evidence" value="ECO:0000266"/>
    <property type="project" value="ComplexPortal"/>
</dbReference>
<dbReference type="GO" id="GO:0031965">
    <property type="term" value="C:nuclear membrane"/>
    <property type="evidence" value="ECO:0007669"/>
    <property type="project" value="UniProtKB-SubCell"/>
</dbReference>
<dbReference type="GO" id="GO:0005643">
    <property type="term" value="C:nuclear pore"/>
    <property type="evidence" value="ECO:0000314"/>
    <property type="project" value="MGI"/>
</dbReference>
<dbReference type="GO" id="GO:0005886">
    <property type="term" value="C:plasma membrane"/>
    <property type="evidence" value="ECO:0007669"/>
    <property type="project" value="Ensembl"/>
</dbReference>
<dbReference type="GO" id="GO:0017056">
    <property type="term" value="F:structural constituent of nuclear pore"/>
    <property type="evidence" value="ECO:0007669"/>
    <property type="project" value="Ensembl"/>
</dbReference>
<dbReference type="GO" id="GO:0007129">
    <property type="term" value="P:homologous chromosome pairing at meiosis"/>
    <property type="evidence" value="ECO:0000315"/>
    <property type="project" value="MGI"/>
</dbReference>
<dbReference type="GO" id="GO:0051028">
    <property type="term" value="P:mRNA transport"/>
    <property type="evidence" value="ECO:0007669"/>
    <property type="project" value="UniProtKB-KW"/>
</dbReference>
<dbReference type="GO" id="GO:0051292">
    <property type="term" value="P:nuclear pore complex assembly"/>
    <property type="evidence" value="ECO:0007669"/>
    <property type="project" value="Ensembl"/>
</dbReference>
<dbReference type="GO" id="GO:0051664">
    <property type="term" value="P:nuclear pore localization"/>
    <property type="evidence" value="ECO:0007669"/>
    <property type="project" value="Ensembl"/>
</dbReference>
<dbReference type="GO" id="GO:0006913">
    <property type="term" value="P:nucleocytoplasmic transport"/>
    <property type="evidence" value="ECO:0000303"/>
    <property type="project" value="ComplexPortal"/>
</dbReference>
<dbReference type="GO" id="GO:0015031">
    <property type="term" value="P:protein transport"/>
    <property type="evidence" value="ECO:0007669"/>
    <property type="project" value="UniProtKB-KW"/>
</dbReference>
<dbReference type="GO" id="GO:0007283">
    <property type="term" value="P:spermatogenesis"/>
    <property type="evidence" value="ECO:0000315"/>
    <property type="project" value="MGI"/>
</dbReference>
<dbReference type="InterPro" id="IPR019049">
    <property type="entry name" value="Nucleoporin_prot_Ndc1/Nup"/>
</dbReference>
<dbReference type="PANTHER" id="PTHR13269">
    <property type="entry name" value="NUCLEOPORIN NDC1"/>
    <property type="match status" value="1"/>
</dbReference>
<dbReference type="PANTHER" id="PTHR13269:SF6">
    <property type="entry name" value="NUCLEOPORIN NDC1"/>
    <property type="match status" value="1"/>
</dbReference>
<dbReference type="Pfam" id="PF09531">
    <property type="entry name" value="Ndc1_Nup"/>
    <property type="match status" value="1"/>
</dbReference>
<proteinExistence type="evidence at protein level"/>
<evidence type="ECO:0000250" key="1"/>
<evidence type="ECO:0000250" key="2">
    <source>
        <dbReference type="UniProtKB" id="Q6AXN4"/>
    </source>
</evidence>
<evidence type="ECO:0000250" key="3">
    <source>
        <dbReference type="UniProtKB" id="Q9BTX1"/>
    </source>
</evidence>
<evidence type="ECO:0000255" key="4"/>
<evidence type="ECO:0000305" key="5"/>
<evidence type="ECO:0007744" key="6">
    <source>
    </source>
</evidence>
<protein>
    <recommendedName>
        <fullName>Nucleoporin NDC1</fullName>
    </recommendedName>
    <alternativeName>
        <fullName>Transmembrane protein 48</fullName>
    </alternativeName>
</protein>
<sequence length="673" mass="75409">MATAASGPCAGGSPRDILWRVLGWRIVTSIVWSVVLLPVCITAFIVLSSINLFHPIQWLSDSCNDFYSSQVIFHLLLLAVVIIIISIFNVEFYTVVPSISGSRLALIARILHPQQLTHSFIHAAMGMAVAWCAAIMTKGQYSSLVVPCTGTESLDSPAAQTCLNEYHLFFLLSGAFMGYSYSLLYFINNMNYLPFPIIQQYKFLRFRRSLLLLVKHSCVESLFMVRNFCIVYYFFGHIPKAWISTALDLHTDEQAHRPLDTIGGLLNVSLLYHVWLCGVFLLVTWYSSWILFKIYATEAHVFPVQPPFAEASDECLPKVLNSNPPRIVKYLALQDLMLLSQYSPSRRQEVFSLSQPGGHPHNWTAISRECLNLLNDMTQKLVLYQEAAATNGRMYSSYSVEPKKLSSAEETAFQTPKPSQTPSVPPLVKTSLFSPKLSTPNVSSPFGTPFGSSVVNRMAGILDVNPFSGSPQSPQLIRRGPRLWTHTSDQQVSAISNPSPCASVTAEGKTVRQPSVIYSWIQNKREQIKNFLSKRVLIMYFFSKHPEASIQAVFSDAQMHIWALEGLSHLVAASFTEDRFGVVQTTLPAILHTLLTLQEAVDKYFKLPHASSKPPRASGSLVDTSYKTLRFAFRASLKTAIYRITTTFGEHLNAVQASAEHQKRLQQFLEFKE</sequence>
<feature type="chain" id="PRO_0000235241" description="Nucleoporin NDC1">
    <location>
        <begin position="1"/>
        <end position="673"/>
    </location>
</feature>
<feature type="topological domain" description="Cytoplasmic" evidence="4">
    <location>
        <begin position="1"/>
        <end position="25"/>
    </location>
</feature>
<feature type="transmembrane region" description="Helical; Name=1" evidence="4">
    <location>
        <begin position="26"/>
        <end position="46"/>
    </location>
</feature>
<feature type="topological domain" description="Perinuclear space" evidence="4">
    <location>
        <begin position="47"/>
        <end position="71"/>
    </location>
</feature>
<feature type="transmembrane region" description="Helical; Name=2" evidence="4">
    <location>
        <begin position="72"/>
        <end position="92"/>
    </location>
</feature>
<feature type="topological domain" description="Cytoplasmic" evidence="4">
    <location>
        <begin position="93"/>
        <end position="115"/>
    </location>
</feature>
<feature type="transmembrane region" description="Helical; Name=3" evidence="4">
    <location>
        <begin position="116"/>
        <end position="136"/>
    </location>
</feature>
<feature type="topological domain" description="Perinuclear space" evidence="4">
    <location>
        <begin position="137"/>
        <end position="166"/>
    </location>
</feature>
<feature type="transmembrane region" description="Helical; Name=4" evidence="4">
    <location>
        <begin position="167"/>
        <end position="187"/>
    </location>
</feature>
<feature type="topological domain" description="Cytoplasmic" evidence="4">
    <location>
        <begin position="188"/>
        <end position="226"/>
    </location>
</feature>
<feature type="transmembrane region" description="Helical; Name=5" evidence="4">
    <location>
        <begin position="227"/>
        <end position="247"/>
    </location>
</feature>
<feature type="topological domain" description="Perinuclear space" evidence="4">
    <location>
        <begin position="248"/>
        <end position="261"/>
    </location>
</feature>
<feature type="transmembrane region" description="Helical; Name=6" evidence="4">
    <location>
        <begin position="262"/>
        <end position="282"/>
    </location>
</feature>
<feature type="topological domain" description="Cytoplasmic" evidence="4">
    <location>
        <begin position="283"/>
        <end position="673"/>
    </location>
</feature>
<feature type="modified residue" description="Phosphoserine" evidence="3">
    <location>
        <position position="407"/>
    </location>
</feature>
<feature type="modified residue" description="Phosphothreonine" evidence="3">
    <location>
        <position position="415"/>
    </location>
</feature>
<feature type="modified residue" description="Phosphoserine" evidence="3">
    <location>
        <position position="438"/>
    </location>
</feature>
<feature type="modified residue" description="Phosphothreonine" evidence="3">
    <location>
        <position position="439"/>
    </location>
</feature>
<feature type="modified residue" description="Phosphoserine" evidence="3">
    <location>
        <position position="444"/>
    </location>
</feature>
<feature type="modified residue" description="Phosphothreonine" evidence="6">
    <location>
        <position position="448"/>
    </location>
</feature>
<feature type="modified residue" description="Phosphoserine" evidence="3">
    <location>
        <position position="470"/>
    </location>
</feature>
<feature type="modified residue" description="Phosphoserine" evidence="3">
    <location>
        <position position="473"/>
    </location>
</feature>